<feature type="chain" id="PRO_0000248672" description="Proline--tRNA ligase">
    <location>
        <begin position="1"/>
        <end position="570"/>
    </location>
</feature>
<reference key="1">
    <citation type="journal article" date="2001" name="J. Bacteriol.">
        <title>Genome sequence and comparative analysis of the solvent-producing bacterium Clostridium acetobutylicum.</title>
        <authorList>
            <person name="Noelling J."/>
            <person name="Breton G."/>
            <person name="Omelchenko M.V."/>
            <person name="Makarova K.S."/>
            <person name="Zeng Q."/>
            <person name="Gibson R."/>
            <person name="Lee H.M."/>
            <person name="Dubois J."/>
            <person name="Qiu D."/>
            <person name="Hitti J."/>
            <person name="Wolf Y.I."/>
            <person name="Tatusov R.L."/>
            <person name="Sabathe F."/>
            <person name="Doucette-Stamm L.A."/>
            <person name="Soucaille P."/>
            <person name="Daly M.J."/>
            <person name="Bennett G.N."/>
            <person name="Koonin E.V."/>
            <person name="Smith D.R."/>
        </authorList>
    </citation>
    <scope>NUCLEOTIDE SEQUENCE [LARGE SCALE GENOMIC DNA]</scope>
    <source>
        <strain>ATCC 824 / DSM 792 / JCM 1419 / IAM 19013 / LMG 5710 / NBRC 13948 / NRRL B-527 / VKM B-1787 / 2291 / W</strain>
    </source>
</reference>
<proteinExistence type="inferred from homology"/>
<sequence length="570" mass="64137">MKMSNMLMLTLRESPAEAEIESHKLMLRSGMIRKMASGVYNYMPLGLKALKKVENIIREEMNAAGAQEFLASALLPSELWKESGRWEVFGPEMFKLKDRNEREFCLGPTHEEVFTDFARSEIKSYKQLPVNLYQIQTKYRDERRPRFGMIRSREFVMKDAYSFDKDNEGLDVSYNKMYEAYTKIFKRCNVSCSAVAADSGAMGGSGSAEFMVKSEIGEDEIAFCTECNYAANIEKAPAVPEKADKEELGELKKVETPHAKTIEELVEFFGVDSKKFVKTIIYRAENKVVAVMVRGDREVNETKVKNAVGSVDVELADEKTVKKATGAEVGFAGPIGLDVDYLLIDNEVTYMYNFIVGANETGYHYANANYDRDFKGTVGDFRNAVEGEKCPKCGKPLTIARGIEVGHIFKLGTKYSEAMKAYFVDENGESKPLIMGCYGIGVNRTMSAVVEQHHDDNGIVWPLSVAPYEVIVVPAVFKSEEQMKEAEKLYTELKKIGVDALLDDRNERAGVKFKDADLIGIPMRITVGKKISEGKVEFKCRNSEEVEVIDLDKVIARVEEEFEKNNLALK</sequence>
<dbReference type="EC" id="6.1.1.15" evidence="1"/>
<dbReference type="EMBL" id="AE001437">
    <property type="protein sequence ID" value="AAK81115.1"/>
    <property type="molecule type" value="Genomic_DNA"/>
</dbReference>
<dbReference type="PIR" id="H97290">
    <property type="entry name" value="H97290"/>
</dbReference>
<dbReference type="RefSeq" id="NP_349775.1">
    <property type="nucleotide sequence ID" value="NC_003030.1"/>
</dbReference>
<dbReference type="RefSeq" id="WP_010966455.1">
    <property type="nucleotide sequence ID" value="NC_003030.1"/>
</dbReference>
<dbReference type="SMR" id="Q97ED5"/>
<dbReference type="STRING" id="272562.CA_C3178"/>
<dbReference type="KEGG" id="cac:CA_C3178"/>
<dbReference type="PATRIC" id="fig|272562.8.peg.3358"/>
<dbReference type="eggNOG" id="COG0442">
    <property type="taxonomic scope" value="Bacteria"/>
</dbReference>
<dbReference type="HOGENOM" id="CLU_016739_0_0_9"/>
<dbReference type="OrthoDB" id="9809052at2"/>
<dbReference type="Proteomes" id="UP000000814">
    <property type="component" value="Chromosome"/>
</dbReference>
<dbReference type="GO" id="GO:0005829">
    <property type="term" value="C:cytosol"/>
    <property type="evidence" value="ECO:0007669"/>
    <property type="project" value="TreeGrafter"/>
</dbReference>
<dbReference type="GO" id="GO:0002161">
    <property type="term" value="F:aminoacyl-tRNA deacylase activity"/>
    <property type="evidence" value="ECO:0007669"/>
    <property type="project" value="InterPro"/>
</dbReference>
<dbReference type="GO" id="GO:0005524">
    <property type="term" value="F:ATP binding"/>
    <property type="evidence" value="ECO:0007669"/>
    <property type="project" value="UniProtKB-UniRule"/>
</dbReference>
<dbReference type="GO" id="GO:0140096">
    <property type="term" value="F:catalytic activity, acting on a protein"/>
    <property type="evidence" value="ECO:0007669"/>
    <property type="project" value="UniProtKB-ARBA"/>
</dbReference>
<dbReference type="GO" id="GO:0004827">
    <property type="term" value="F:proline-tRNA ligase activity"/>
    <property type="evidence" value="ECO:0007669"/>
    <property type="project" value="UniProtKB-UniRule"/>
</dbReference>
<dbReference type="GO" id="GO:0016740">
    <property type="term" value="F:transferase activity"/>
    <property type="evidence" value="ECO:0007669"/>
    <property type="project" value="UniProtKB-ARBA"/>
</dbReference>
<dbReference type="GO" id="GO:0006433">
    <property type="term" value="P:prolyl-tRNA aminoacylation"/>
    <property type="evidence" value="ECO:0007669"/>
    <property type="project" value="UniProtKB-UniRule"/>
</dbReference>
<dbReference type="CDD" id="cd04334">
    <property type="entry name" value="ProRS-INS"/>
    <property type="match status" value="1"/>
</dbReference>
<dbReference type="CDD" id="cd00861">
    <property type="entry name" value="ProRS_anticodon_short"/>
    <property type="match status" value="1"/>
</dbReference>
<dbReference type="CDD" id="cd00779">
    <property type="entry name" value="ProRS_core_prok"/>
    <property type="match status" value="1"/>
</dbReference>
<dbReference type="FunFam" id="3.30.930.10:FF:000066">
    <property type="entry name" value="Proline--tRNA ligase"/>
    <property type="match status" value="1"/>
</dbReference>
<dbReference type="FunFam" id="3.40.50.800:FF:000011">
    <property type="entry name" value="Proline--tRNA ligase"/>
    <property type="match status" value="1"/>
</dbReference>
<dbReference type="Gene3D" id="3.40.50.800">
    <property type="entry name" value="Anticodon-binding domain"/>
    <property type="match status" value="1"/>
</dbReference>
<dbReference type="Gene3D" id="3.30.930.10">
    <property type="entry name" value="Bira Bifunctional Protein, Domain 2"/>
    <property type="match status" value="2"/>
</dbReference>
<dbReference type="HAMAP" id="MF_01569">
    <property type="entry name" value="Pro_tRNA_synth_type1"/>
    <property type="match status" value="1"/>
</dbReference>
<dbReference type="InterPro" id="IPR002314">
    <property type="entry name" value="aa-tRNA-synt_IIb"/>
</dbReference>
<dbReference type="InterPro" id="IPR006195">
    <property type="entry name" value="aa-tRNA-synth_II"/>
</dbReference>
<dbReference type="InterPro" id="IPR045864">
    <property type="entry name" value="aa-tRNA-synth_II/BPL/LPL"/>
</dbReference>
<dbReference type="InterPro" id="IPR004154">
    <property type="entry name" value="Anticodon-bd"/>
</dbReference>
<dbReference type="InterPro" id="IPR036621">
    <property type="entry name" value="Anticodon-bd_dom_sf"/>
</dbReference>
<dbReference type="InterPro" id="IPR002316">
    <property type="entry name" value="Pro-tRNA-ligase_IIa"/>
</dbReference>
<dbReference type="InterPro" id="IPR004500">
    <property type="entry name" value="Pro-tRNA-synth_IIa_bac-type"/>
</dbReference>
<dbReference type="InterPro" id="IPR023717">
    <property type="entry name" value="Pro-tRNA-Synthase_IIa_type1"/>
</dbReference>
<dbReference type="InterPro" id="IPR050062">
    <property type="entry name" value="Pro-tRNA_synthetase"/>
</dbReference>
<dbReference type="InterPro" id="IPR044140">
    <property type="entry name" value="ProRS_anticodon_short"/>
</dbReference>
<dbReference type="InterPro" id="IPR033730">
    <property type="entry name" value="ProRS_core_prok"/>
</dbReference>
<dbReference type="InterPro" id="IPR036754">
    <property type="entry name" value="YbaK/aa-tRNA-synt-asso_dom_sf"/>
</dbReference>
<dbReference type="InterPro" id="IPR007214">
    <property type="entry name" value="YbaK/aa-tRNA-synth-assoc-dom"/>
</dbReference>
<dbReference type="NCBIfam" id="NF006625">
    <property type="entry name" value="PRK09194.1"/>
    <property type="match status" value="1"/>
</dbReference>
<dbReference type="NCBIfam" id="TIGR00409">
    <property type="entry name" value="proS_fam_II"/>
    <property type="match status" value="1"/>
</dbReference>
<dbReference type="PANTHER" id="PTHR42753">
    <property type="entry name" value="MITOCHONDRIAL RIBOSOME PROTEIN L39/PROLYL-TRNA LIGASE FAMILY MEMBER"/>
    <property type="match status" value="1"/>
</dbReference>
<dbReference type="PANTHER" id="PTHR42753:SF2">
    <property type="entry name" value="PROLINE--TRNA LIGASE"/>
    <property type="match status" value="1"/>
</dbReference>
<dbReference type="Pfam" id="PF03129">
    <property type="entry name" value="HGTP_anticodon"/>
    <property type="match status" value="1"/>
</dbReference>
<dbReference type="Pfam" id="PF00587">
    <property type="entry name" value="tRNA-synt_2b"/>
    <property type="match status" value="1"/>
</dbReference>
<dbReference type="Pfam" id="PF04073">
    <property type="entry name" value="tRNA_edit"/>
    <property type="match status" value="1"/>
</dbReference>
<dbReference type="PIRSF" id="PIRSF001535">
    <property type="entry name" value="ProRS_1"/>
    <property type="match status" value="1"/>
</dbReference>
<dbReference type="PRINTS" id="PR01046">
    <property type="entry name" value="TRNASYNTHPRO"/>
</dbReference>
<dbReference type="SUPFAM" id="SSF52954">
    <property type="entry name" value="Class II aaRS ABD-related"/>
    <property type="match status" value="1"/>
</dbReference>
<dbReference type="SUPFAM" id="SSF55681">
    <property type="entry name" value="Class II aaRS and biotin synthetases"/>
    <property type="match status" value="1"/>
</dbReference>
<dbReference type="SUPFAM" id="SSF55826">
    <property type="entry name" value="YbaK/ProRS associated domain"/>
    <property type="match status" value="1"/>
</dbReference>
<dbReference type="PROSITE" id="PS50862">
    <property type="entry name" value="AA_TRNA_LIGASE_II"/>
    <property type="match status" value="1"/>
</dbReference>
<evidence type="ECO:0000255" key="1">
    <source>
        <dbReference type="HAMAP-Rule" id="MF_01569"/>
    </source>
</evidence>
<protein>
    <recommendedName>
        <fullName evidence="1">Proline--tRNA ligase</fullName>
        <ecNumber evidence="1">6.1.1.15</ecNumber>
    </recommendedName>
    <alternativeName>
        <fullName evidence="1">Prolyl-tRNA synthetase</fullName>
        <shortName evidence="1">ProRS</shortName>
    </alternativeName>
</protein>
<organism>
    <name type="scientific">Clostridium acetobutylicum (strain ATCC 824 / DSM 792 / JCM 1419 / IAM 19013 / LMG 5710 / NBRC 13948 / NRRL B-527 / VKM B-1787 / 2291 / W)</name>
    <dbReference type="NCBI Taxonomy" id="272562"/>
    <lineage>
        <taxon>Bacteria</taxon>
        <taxon>Bacillati</taxon>
        <taxon>Bacillota</taxon>
        <taxon>Clostridia</taxon>
        <taxon>Eubacteriales</taxon>
        <taxon>Clostridiaceae</taxon>
        <taxon>Clostridium</taxon>
    </lineage>
</organism>
<accession>Q97ED5</accession>
<gene>
    <name evidence="1" type="primary">proS</name>
    <name type="ordered locus">CA_C3178</name>
</gene>
<name>SYP_CLOAB</name>
<keyword id="KW-0030">Aminoacyl-tRNA synthetase</keyword>
<keyword id="KW-0067">ATP-binding</keyword>
<keyword id="KW-0963">Cytoplasm</keyword>
<keyword id="KW-0436">Ligase</keyword>
<keyword id="KW-0547">Nucleotide-binding</keyword>
<keyword id="KW-0648">Protein biosynthesis</keyword>
<keyword id="KW-1185">Reference proteome</keyword>
<comment type="function">
    <text evidence="1">Catalyzes the attachment of proline to tRNA(Pro) in a two-step reaction: proline is first activated by ATP to form Pro-AMP and then transferred to the acceptor end of tRNA(Pro). As ProRS can inadvertently accommodate and process non-cognate amino acids such as alanine and cysteine, to avoid such errors it has two additional distinct editing activities against alanine. One activity is designated as 'pretransfer' editing and involves the tRNA(Pro)-independent hydrolysis of activated Ala-AMP. The other activity is designated 'posttransfer' editing and involves deacylation of mischarged Ala-tRNA(Pro). The misacylated Cys-tRNA(Pro) is not edited by ProRS.</text>
</comment>
<comment type="catalytic activity">
    <reaction evidence="1">
        <text>tRNA(Pro) + L-proline + ATP = L-prolyl-tRNA(Pro) + AMP + diphosphate</text>
        <dbReference type="Rhea" id="RHEA:14305"/>
        <dbReference type="Rhea" id="RHEA-COMP:9700"/>
        <dbReference type="Rhea" id="RHEA-COMP:9702"/>
        <dbReference type="ChEBI" id="CHEBI:30616"/>
        <dbReference type="ChEBI" id="CHEBI:33019"/>
        <dbReference type="ChEBI" id="CHEBI:60039"/>
        <dbReference type="ChEBI" id="CHEBI:78442"/>
        <dbReference type="ChEBI" id="CHEBI:78532"/>
        <dbReference type="ChEBI" id="CHEBI:456215"/>
        <dbReference type="EC" id="6.1.1.15"/>
    </reaction>
</comment>
<comment type="subunit">
    <text evidence="1">Homodimer.</text>
</comment>
<comment type="subcellular location">
    <subcellularLocation>
        <location evidence="1">Cytoplasm</location>
    </subcellularLocation>
</comment>
<comment type="domain">
    <text evidence="1">Consists of three domains: the N-terminal catalytic domain, the editing domain and the C-terminal anticodon-binding domain.</text>
</comment>
<comment type="similarity">
    <text evidence="1">Belongs to the class-II aminoacyl-tRNA synthetase family. ProS type 1 subfamily.</text>
</comment>